<organism>
    <name type="scientific">Escherichia coli</name>
    <dbReference type="NCBI Taxonomy" id="562"/>
    <lineage>
        <taxon>Bacteria</taxon>
        <taxon>Pseudomonadati</taxon>
        <taxon>Pseudomonadota</taxon>
        <taxon>Gammaproteobacteria</taxon>
        <taxon>Enterobacterales</taxon>
        <taxon>Enterobacteriaceae</taxon>
        <taxon>Escherichia</taxon>
    </lineage>
</organism>
<protein>
    <recommendedName>
        <fullName>Dihydrofolate reductase type A10</fullName>
        <ecNumber>1.5.1.3</ecNumber>
    </recommendedName>
    <alternativeName>
        <fullName>Dihydrofolate reductase type X</fullName>
        <shortName>DHFRX</shortName>
    </alternativeName>
</protein>
<dbReference type="EC" id="1.5.1.3"/>
<dbReference type="EMBL" id="L06418">
    <property type="protein sequence ID" value="AAA92749.1"/>
    <property type="molecule type" value="Genomic_DNA"/>
</dbReference>
<dbReference type="PIR" id="A49790">
    <property type="entry name" value="A49790"/>
</dbReference>
<dbReference type="RefSeq" id="WP_001027119.1">
    <property type="nucleotide sequence ID" value="NZ_SHIP01000080.1"/>
</dbReference>
<dbReference type="SMR" id="Q04515"/>
<dbReference type="CARD" id="ARO:3003011">
    <property type="molecule name" value="dfrA10"/>
    <property type="mechanism identifier" value="ARO:0001002"/>
    <property type="mechanism name" value="antibiotic target replacement"/>
</dbReference>
<dbReference type="KEGG" id="ag:AAA92749"/>
<dbReference type="UniPathway" id="UPA00077">
    <property type="reaction ID" value="UER00158"/>
</dbReference>
<dbReference type="GO" id="GO:0004146">
    <property type="term" value="F:dihydrofolate reductase activity"/>
    <property type="evidence" value="ECO:0007669"/>
    <property type="project" value="UniProtKB-EC"/>
</dbReference>
<dbReference type="GO" id="GO:0050661">
    <property type="term" value="F:NADP binding"/>
    <property type="evidence" value="ECO:0007669"/>
    <property type="project" value="InterPro"/>
</dbReference>
<dbReference type="GO" id="GO:0046452">
    <property type="term" value="P:dihydrofolate metabolic process"/>
    <property type="evidence" value="ECO:0007669"/>
    <property type="project" value="TreeGrafter"/>
</dbReference>
<dbReference type="GO" id="GO:0046655">
    <property type="term" value="P:folic acid metabolic process"/>
    <property type="evidence" value="ECO:0007669"/>
    <property type="project" value="TreeGrafter"/>
</dbReference>
<dbReference type="GO" id="GO:0006730">
    <property type="term" value="P:one-carbon metabolic process"/>
    <property type="evidence" value="ECO:0007669"/>
    <property type="project" value="UniProtKB-KW"/>
</dbReference>
<dbReference type="GO" id="GO:0046677">
    <property type="term" value="P:response to antibiotic"/>
    <property type="evidence" value="ECO:0007669"/>
    <property type="project" value="UniProtKB-KW"/>
</dbReference>
<dbReference type="GO" id="GO:0031427">
    <property type="term" value="P:response to methotrexate"/>
    <property type="evidence" value="ECO:0007669"/>
    <property type="project" value="UniProtKB-KW"/>
</dbReference>
<dbReference type="GO" id="GO:0046654">
    <property type="term" value="P:tetrahydrofolate biosynthetic process"/>
    <property type="evidence" value="ECO:0007669"/>
    <property type="project" value="UniProtKB-UniPathway"/>
</dbReference>
<dbReference type="CDD" id="cd00209">
    <property type="entry name" value="DHFR"/>
    <property type="match status" value="1"/>
</dbReference>
<dbReference type="Gene3D" id="3.40.430.10">
    <property type="entry name" value="Dihydrofolate Reductase, subunit A"/>
    <property type="match status" value="1"/>
</dbReference>
<dbReference type="InterPro" id="IPR012259">
    <property type="entry name" value="DHFR"/>
</dbReference>
<dbReference type="InterPro" id="IPR024072">
    <property type="entry name" value="DHFR-like_dom_sf"/>
</dbReference>
<dbReference type="InterPro" id="IPR017925">
    <property type="entry name" value="DHFR_CS"/>
</dbReference>
<dbReference type="InterPro" id="IPR001796">
    <property type="entry name" value="DHFR_dom"/>
</dbReference>
<dbReference type="NCBIfam" id="NF000018">
    <property type="entry name" value="trim_DfrA10"/>
    <property type="match status" value="1"/>
</dbReference>
<dbReference type="PANTHER" id="PTHR48069">
    <property type="entry name" value="DIHYDROFOLATE REDUCTASE"/>
    <property type="match status" value="1"/>
</dbReference>
<dbReference type="PANTHER" id="PTHR48069:SF3">
    <property type="entry name" value="DIHYDROFOLATE REDUCTASE"/>
    <property type="match status" value="1"/>
</dbReference>
<dbReference type="Pfam" id="PF00186">
    <property type="entry name" value="DHFR_1"/>
    <property type="match status" value="1"/>
</dbReference>
<dbReference type="PRINTS" id="PR00070">
    <property type="entry name" value="DHFR"/>
</dbReference>
<dbReference type="SUPFAM" id="SSF53597">
    <property type="entry name" value="Dihydrofolate reductase-like"/>
    <property type="match status" value="1"/>
</dbReference>
<dbReference type="PROSITE" id="PS00075">
    <property type="entry name" value="DHFR_1"/>
    <property type="match status" value="1"/>
</dbReference>
<dbReference type="PROSITE" id="PS51330">
    <property type="entry name" value="DHFR_2"/>
    <property type="match status" value="1"/>
</dbReference>
<proteinExistence type="inferred from homology"/>
<sequence length="187" mass="21220">MNISLIFANELITRAFGNQGKLPWQFIKEDMQFFQKTTENSVVVMGLNTWRSLPKMKKLGRDFIVISSTITEHEVLNNNIQIFKSFESFLEAFRDTTKPINVIGGVGLLSEAIEHASTVYMSSIHMVKPVHADVYVPVELMNKLYSDFKYPENILWVGDPIDSVYSLSIDKFVRPASLVGVPNDINT</sequence>
<keyword id="KW-0046">Antibiotic resistance</keyword>
<keyword id="KW-0487">Methotrexate resistance</keyword>
<keyword id="KW-0521">NADP</keyword>
<keyword id="KW-0554">One-carbon metabolism</keyword>
<keyword id="KW-0560">Oxidoreductase</keyword>
<keyword id="KW-0614">Plasmid</keyword>
<keyword id="KW-0817">Trimethoprim resistance</keyword>
<accession>Q04515</accession>
<comment type="function">
    <text evidence="1">Key enzyme in folate metabolism. Catalyzes an essential reaction for de novo glycine and purine synthesis, and for DNA precursor synthesis (By similarity).</text>
</comment>
<comment type="catalytic activity">
    <reaction evidence="2">
        <text>(6S)-5,6,7,8-tetrahydrofolate + NADP(+) = 7,8-dihydrofolate + NADPH + H(+)</text>
        <dbReference type="Rhea" id="RHEA:15009"/>
        <dbReference type="ChEBI" id="CHEBI:15378"/>
        <dbReference type="ChEBI" id="CHEBI:57451"/>
        <dbReference type="ChEBI" id="CHEBI:57453"/>
        <dbReference type="ChEBI" id="CHEBI:57783"/>
        <dbReference type="ChEBI" id="CHEBI:58349"/>
        <dbReference type="EC" id="1.5.1.3"/>
    </reaction>
</comment>
<comment type="pathway">
    <text>Cofactor biosynthesis; tetrahydrofolate biosynthesis; 5,6,7,8-tetrahydrofolate from 7,8-dihydrofolate: step 1/1.</text>
</comment>
<comment type="subunit">
    <text evidence="1">Homodimer.</text>
</comment>
<comment type="miscellaneous">
    <text>Confers trimethoprim resistance.</text>
</comment>
<comment type="similarity">
    <text evidence="3">Belongs to the dihydrofolate reductase family.</text>
</comment>
<reference key="1">
    <citation type="journal article" date="1991" name="Antimicrob. Agents Chemother.">
        <title>A new trimethoprim resistance gene, dhfrX, in the In7 integron of plasmid pDGO100.</title>
        <authorList>
            <person name="Parsons Y."/>
            <person name="Hall R.M."/>
            <person name="Stokes H.W."/>
        </authorList>
    </citation>
    <scope>NUCLEOTIDE SEQUENCE [GENOMIC DNA]</scope>
    <source>
        <strain>VA292</strain>
    </source>
</reference>
<reference key="2">
    <citation type="journal article" date="1993" name="Plasmid">
        <title>The partial 3'-conserved segment duplications in the integrons In6 from pSa and In7 from pDGO100 have a common origin.</title>
        <authorList>
            <person name="Stokes H.W."/>
            <person name="Tomaras C."/>
            <person name="Parsons Y."/>
            <person name="Hall R.M."/>
        </authorList>
    </citation>
    <scope>NUCLEOTIDE SEQUENCE [GENOMIC DNA]</scope>
</reference>
<reference key="3">
    <citation type="journal article" date="2003" name="Antimicrob. Agents Chemother.">
        <title>In34, a complex In5 family class 1 integron containing orf513 and dfrA10.</title>
        <authorList>
            <person name="Partridge S.R."/>
            <person name="Hall R.M."/>
        </authorList>
    </citation>
    <scope>NUCLEOTIDE SEQUENCE [GENOMIC DNA]</scope>
</reference>
<geneLocation type="plasmid">
    <name>pDGO100</name>
</geneLocation>
<name>DYR10_ECOLX</name>
<feature type="chain" id="PRO_0000186428" description="Dihydrofolate reductase type A10">
    <location>
        <begin position="1"/>
        <end position="187"/>
    </location>
</feature>
<feature type="domain" description="DHFR" evidence="2">
    <location>
        <begin position="2"/>
        <end position="174"/>
    </location>
</feature>
<evidence type="ECO:0000250" key="1"/>
<evidence type="ECO:0000255" key="2">
    <source>
        <dbReference type="PROSITE-ProRule" id="PRU00660"/>
    </source>
</evidence>
<evidence type="ECO:0000305" key="3"/>
<gene>
    <name type="primary">dfrA10</name>
    <name type="synonym">dfr10</name>
</gene>